<name>CASS_RICCO</name>
<accession>P59287</accession>
<accession>B9RHX1</accession>
<proteinExistence type="evidence at protein level"/>
<keyword id="KW-0150">Chloroplast</keyword>
<keyword id="KW-0456">Lyase</keyword>
<keyword id="KW-0460">Magnesium</keyword>
<keyword id="KW-0479">Metal-binding</keyword>
<keyword id="KW-0611">Plant defense</keyword>
<keyword id="KW-0934">Plastid</keyword>
<keyword id="KW-1185">Reference proteome</keyword>
<keyword id="KW-0809">Transit peptide</keyword>
<reference key="1">
    <citation type="journal article" date="1994" name="Proc. Natl. Acad. Sci. U.S.A.">
        <title>Cloning of casbene synthase cDNA: evidence for conserved structural features among terpenoid cyclases in plants.</title>
        <authorList>
            <person name="Mau C.J."/>
            <person name="West C.A."/>
        </authorList>
    </citation>
    <scope>NUCLEOTIDE SEQUENCE [MRNA]</scope>
</reference>
<reference key="2">
    <citation type="journal article" date="2010" name="Nat. Biotechnol.">
        <title>Draft genome sequence of the oilseed species Ricinus communis.</title>
        <authorList>
            <person name="Chan A.P."/>
            <person name="Crabtree J."/>
            <person name="Zhao Q."/>
            <person name="Lorenzi H."/>
            <person name="Orvis J."/>
            <person name="Puiu D."/>
            <person name="Melake-Berhan A."/>
            <person name="Jones K.M."/>
            <person name="Redman J."/>
            <person name="Chen G."/>
            <person name="Cahoon E.B."/>
            <person name="Gedil M."/>
            <person name="Stanke M."/>
            <person name="Haas B.J."/>
            <person name="Wortman J.R."/>
            <person name="Fraser-Liggett C.M."/>
            <person name="Ravel J."/>
            <person name="Rabinowicz P.D."/>
        </authorList>
    </citation>
    <scope>NUCLEOTIDE SEQUENCE [LARGE SCALE GENOMIC DNA]</scope>
    <source>
        <strain>cv. Hale</strain>
    </source>
</reference>
<reference key="3">
    <citation type="journal article" date="1996" name="Arch. Biochem. Biophys.">
        <title>High level expression of Ricinus communis casbene synthase in Escherichia coli and characterization of the recombinant enzyme.</title>
        <authorList>
            <person name="Hill A.M."/>
            <person name="Cane D.E."/>
            <person name="Mau C.J."/>
            <person name="West C.A."/>
        </authorList>
    </citation>
    <scope>CHARACTERIZATION</scope>
</reference>
<protein>
    <recommendedName>
        <fullName>Casbene synthase, chloroplastic</fullName>
        <ecNumber>4.2.3.8</ecNumber>
    </recommendedName>
</protein>
<organism>
    <name type="scientific">Ricinus communis</name>
    <name type="common">Castor bean</name>
    <dbReference type="NCBI Taxonomy" id="3988"/>
    <lineage>
        <taxon>Eukaryota</taxon>
        <taxon>Viridiplantae</taxon>
        <taxon>Streptophyta</taxon>
        <taxon>Embryophyta</taxon>
        <taxon>Tracheophyta</taxon>
        <taxon>Spermatophyta</taxon>
        <taxon>Magnoliopsida</taxon>
        <taxon>eudicotyledons</taxon>
        <taxon>Gunneridae</taxon>
        <taxon>Pentapetalae</taxon>
        <taxon>rosids</taxon>
        <taxon>fabids</taxon>
        <taxon>Malpighiales</taxon>
        <taxon>Euphorbiaceae</taxon>
        <taxon>Acalyphoideae</taxon>
        <taxon>Acalypheae</taxon>
        <taxon>Ricinus</taxon>
    </lineage>
</organism>
<dbReference type="EC" id="4.2.3.8"/>
<dbReference type="EMBL" id="L32134">
    <property type="status" value="NOT_ANNOTATED_CDS"/>
    <property type="molecule type" value="mRNA"/>
</dbReference>
<dbReference type="EMBL" id="EQ973781">
    <property type="protein sequence ID" value="EEF48743.1"/>
    <property type="molecule type" value="Genomic_DNA"/>
</dbReference>
<dbReference type="RefSeq" id="XP_002513340.1">
    <property type="nucleotide sequence ID" value="XM_002513294.2"/>
</dbReference>
<dbReference type="SMR" id="P59287"/>
<dbReference type="FunCoup" id="P59287">
    <property type="interactions" value="11"/>
</dbReference>
<dbReference type="STRING" id="3988.P59287"/>
<dbReference type="KEGG" id="rcu:8259981"/>
<dbReference type="InParanoid" id="P59287"/>
<dbReference type="OrthoDB" id="847647at2759"/>
<dbReference type="BioCyc" id="MetaCyc:MONOMER-14979"/>
<dbReference type="BRENDA" id="4.2.3.8">
    <property type="organism ID" value="1204"/>
</dbReference>
<dbReference type="Proteomes" id="UP000008311">
    <property type="component" value="Unassembled WGS sequence"/>
</dbReference>
<dbReference type="GO" id="GO:0009507">
    <property type="term" value="C:chloroplast"/>
    <property type="evidence" value="ECO:0007669"/>
    <property type="project" value="UniProtKB-SubCell"/>
</dbReference>
<dbReference type="GO" id="GO:0050449">
    <property type="term" value="F:casbene synthase activity"/>
    <property type="evidence" value="ECO:0007669"/>
    <property type="project" value="UniProtKB-EC"/>
</dbReference>
<dbReference type="GO" id="GO:0000287">
    <property type="term" value="F:magnesium ion binding"/>
    <property type="evidence" value="ECO:0007669"/>
    <property type="project" value="InterPro"/>
</dbReference>
<dbReference type="GO" id="GO:0006952">
    <property type="term" value="P:defense response"/>
    <property type="evidence" value="ECO:0007669"/>
    <property type="project" value="UniProtKB-KW"/>
</dbReference>
<dbReference type="GO" id="GO:0016102">
    <property type="term" value="P:diterpenoid biosynthetic process"/>
    <property type="evidence" value="ECO:0007669"/>
    <property type="project" value="InterPro"/>
</dbReference>
<dbReference type="GO" id="GO:0120251">
    <property type="term" value="P:hydrocarbon biosynthetic process"/>
    <property type="evidence" value="ECO:0007669"/>
    <property type="project" value="UniProtKB-ARBA"/>
</dbReference>
<dbReference type="CDD" id="cd00684">
    <property type="entry name" value="Terpene_cyclase_plant_C1"/>
    <property type="match status" value="1"/>
</dbReference>
<dbReference type="FunFam" id="1.10.600.10:FF:000007">
    <property type="entry name" value="Isoprene synthase, chloroplastic"/>
    <property type="match status" value="1"/>
</dbReference>
<dbReference type="FunFam" id="1.50.10.130:FF:000001">
    <property type="entry name" value="Isoprene synthase, chloroplastic"/>
    <property type="match status" value="1"/>
</dbReference>
<dbReference type="Gene3D" id="1.10.600.10">
    <property type="entry name" value="Farnesyl Diphosphate Synthase"/>
    <property type="match status" value="1"/>
</dbReference>
<dbReference type="Gene3D" id="1.50.10.130">
    <property type="entry name" value="Terpene synthase, N-terminal domain"/>
    <property type="match status" value="1"/>
</dbReference>
<dbReference type="InterPro" id="IPR008949">
    <property type="entry name" value="Isoprenoid_synthase_dom_sf"/>
</dbReference>
<dbReference type="InterPro" id="IPR034741">
    <property type="entry name" value="Terpene_cyclase-like_1_C"/>
</dbReference>
<dbReference type="InterPro" id="IPR044814">
    <property type="entry name" value="Terpene_cyclase_plant_C1"/>
</dbReference>
<dbReference type="InterPro" id="IPR001906">
    <property type="entry name" value="Terpene_synth_N"/>
</dbReference>
<dbReference type="InterPro" id="IPR036965">
    <property type="entry name" value="Terpene_synth_N_sf"/>
</dbReference>
<dbReference type="InterPro" id="IPR050148">
    <property type="entry name" value="Terpene_synthase-like"/>
</dbReference>
<dbReference type="InterPro" id="IPR005630">
    <property type="entry name" value="Terpene_synthase_metal-bd"/>
</dbReference>
<dbReference type="InterPro" id="IPR008930">
    <property type="entry name" value="Terpenoid_cyclase/PrenylTrfase"/>
</dbReference>
<dbReference type="PANTHER" id="PTHR31225:SF93">
    <property type="entry name" value="ALPHA-HUMULENE_(-)-(E)-BETA-CARYOPHYLLENE SYNTHASE"/>
    <property type="match status" value="1"/>
</dbReference>
<dbReference type="PANTHER" id="PTHR31225">
    <property type="entry name" value="OS04G0344100 PROTEIN-RELATED"/>
    <property type="match status" value="1"/>
</dbReference>
<dbReference type="Pfam" id="PF01397">
    <property type="entry name" value="Terpene_synth"/>
    <property type="match status" value="1"/>
</dbReference>
<dbReference type="Pfam" id="PF03936">
    <property type="entry name" value="Terpene_synth_C"/>
    <property type="match status" value="1"/>
</dbReference>
<dbReference type="SFLD" id="SFLDS00005">
    <property type="entry name" value="Isoprenoid_Synthase_Type_I"/>
    <property type="match status" value="1"/>
</dbReference>
<dbReference type="SFLD" id="SFLDG01019">
    <property type="entry name" value="Terpene_Cyclase_Like_1_C_Termi"/>
    <property type="match status" value="1"/>
</dbReference>
<dbReference type="SUPFAM" id="SSF48239">
    <property type="entry name" value="Terpenoid cyclases/Protein prenyltransferases"/>
    <property type="match status" value="1"/>
</dbReference>
<dbReference type="SUPFAM" id="SSF48576">
    <property type="entry name" value="Terpenoid synthases"/>
    <property type="match status" value="1"/>
</dbReference>
<sequence>MALPSAAMQSNPEKLNLFHRLSSLPTTSLEYGNNRFPFFSSSAKSHFKKPTQACLSSTTHQEVRPLAYFPPTVWGNRFASLTFNPSEFESYDERVIVLKKKVKDILISSTSDSVETVILIDLLCRLGVSYHFENDIEELLSKIFNSQPDLVDEKECDLYTAAIVFRVFRQHGFKMSSDVFSKFKDSDGKFKESLRGDAKGMLSLFEASHLSVHGEDILEEAFAFTKDYLQSSAVELFPNLKRHITNALEQPFHSGVPRLEARKFIDLYEADIECRNETLLEFAKLDYNRVQLLHQQELCQFSKWWKDLNLASDIPYARDRMAEIFFWAVAMYFEPDYAHTRMIIAKVVLLISLIDDTIDAYATMEETHILAEAVARWDMSCLEKLPDYMKVIYKLLLNTFSEFEKELTAEGKSYSVKYGREAFQELVRGYYLEAVWRDEGKIPSFDDYLYNGSMTTGLPLVSTASFMGVQEITGLNEFQWLETNPKLSYASGAFIRLVNDLTSHVTEQQRGHVASCIDCYMNQHGVSKDEAVKILQKMATDCWKEINEECMRQSQVSVGHLMRIVNLARLTDVSYKYGDGYTDSQQLKQFVKGLFVDPISI</sequence>
<feature type="transit peptide" description="Chloroplast" evidence="2">
    <location>
        <begin position="1"/>
        <end position="56"/>
    </location>
</feature>
<feature type="chain" id="PRO_0000033620" description="Casbene synthase, chloroplastic">
    <location>
        <begin position="57"/>
        <end position="601"/>
    </location>
</feature>
<feature type="short sequence motif" description="DDXXD motif">
    <location>
        <begin position="355"/>
        <end position="359"/>
    </location>
</feature>
<feature type="binding site" evidence="1">
    <location>
        <position position="355"/>
    </location>
    <ligand>
        <name>Mg(2+)</name>
        <dbReference type="ChEBI" id="CHEBI:18420"/>
        <label>1</label>
    </ligand>
</feature>
<feature type="binding site" evidence="1">
    <location>
        <position position="355"/>
    </location>
    <ligand>
        <name>Mg(2+)</name>
        <dbReference type="ChEBI" id="CHEBI:18420"/>
        <label>2</label>
    </ligand>
</feature>
<feature type="binding site" evidence="1">
    <location>
        <position position="359"/>
    </location>
    <ligand>
        <name>Mg(2+)</name>
        <dbReference type="ChEBI" id="CHEBI:18420"/>
        <label>1</label>
    </ligand>
</feature>
<feature type="binding site" evidence="1">
    <location>
        <position position="359"/>
    </location>
    <ligand>
        <name>Mg(2+)</name>
        <dbReference type="ChEBI" id="CHEBI:18420"/>
        <label>2</label>
    </ligand>
</feature>
<feature type="binding site" evidence="1">
    <location>
        <position position="499"/>
    </location>
    <ligand>
        <name>Mg(2+)</name>
        <dbReference type="ChEBI" id="CHEBI:18420"/>
        <label>3</label>
    </ligand>
</feature>
<feature type="binding site" evidence="1">
    <location>
        <position position="503"/>
    </location>
    <ligand>
        <name>Mg(2+)</name>
        <dbReference type="ChEBI" id="CHEBI:18420"/>
        <label>3</label>
    </ligand>
</feature>
<feature type="binding site" evidence="1">
    <location>
        <position position="507"/>
    </location>
    <ligand>
        <name>Mg(2+)</name>
        <dbReference type="ChEBI" id="CHEBI:18420"/>
        <label>3</label>
    </ligand>
</feature>
<comment type="function">
    <text>Catalyzes the cyclization of geranylgeranyl diphosphate to casbene, a diterpene phytoalexin with antibacterial and antifungal activity.</text>
</comment>
<comment type="catalytic activity">
    <reaction>
        <text>(2E,6E,10E)-geranylgeranyl diphosphate = casbene + diphosphate</text>
        <dbReference type="Rhea" id="RHEA:14901"/>
        <dbReference type="ChEBI" id="CHEBI:17695"/>
        <dbReference type="ChEBI" id="CHEBI:33019"/>
        <dbReference type="ChEBI" id="CHEBI:58756"/>
        <dbReference type="EC" id="4.2.3.8"/>
    </reaction>
</comment>
<comment type="cofactor">
    <cofactor evidence="1">
        <name>Mg(2+)</name>
        <dbReference type="ChEBI" id="CHEBI:18420"/>
    </cofactor>
    <text evidence="1">Binds 3 Mg(2+) ions per subunit.</text>
</comment>
<comment type="biophysicochemical properties">
    <kinetics>
        <KM>1.9 uM for geranylgeranyl diphosphate</KM>
    </kinetics>
</comment>
<comment type="subcellular location">
    <subcellularLocation>
        <location>Plastid</location>
        <location>Chloroplast</location>
    </subcellularLocation>
</comment>
<comment type="induction">
    <text>By oligogalacturonide fragments released by fungal infection. Detected after 5 hours of incubation with the pectic fragments and reaches a maximum after 10-12 hours.</text>
</comment>
<comment type="domain">
    <text>The Asp-Asp-Xaa-Xaa-Asp/Glu (DDXXD/E) motif is important for the catalytic activity, presumably through binding to Mg(2+).</text>
</comment>
<comment type="similarity">
    <text evidence="3">Belongs to the terpene synthase family.</text>
</comment>
<comment type="caution">
    <text evidence="3">It is uncertain whether Met-1 or Met-8 is the initiator.</text>
</comment>
<gene>
    <name type="ORF">RCOM_1574350</name>
</gene>
<evidence type="ECO:0000250" key="1"/>
<evidence type="ECO:0000255" key="2"/>
<evidence type="ECO:0000305" key="3"/>